<name>MSHA_THECD</name>
<dbReference type="EC" id="2.4.1.250" evidence="1"/>
<dbReference type="EMBL" id="CP001738">
    <property type="protein sequence ID" value="ACY96288.1"/>
    <property type="molecule type" value="Genomic_DNA"/>
</dbReference>
<dbReference type="RefSeq" id="WP_012851072.1">
    <property type="nucleotide sequence ID" value="NC_013510.1"/>
</dbReference>
<dbReference type="SMR" id="D1A4Q3"/>
<dbReference type="STRING" id="471852.Tcur_0695"/>
<dbReference type="CAZy" id="GT4">
    <property type="family name" value="Glycosyltransferase Family 4"/>
</dbReference>
<dbReference type="KEGG" id="tcu:Tcur_0695"/>
<dbReference type="eggNOG" id="COG0438">
    <property type="taxonomic scope" value="Bacteria"/>
</dbReference>
<dbReference type="HOGENOM" id="CLU_009583_2_3_11"/>
<dbReference type="OrthoDB" id="9810929at2"/>
<dbReference type="Proteomes" id="UP000001918">
    <property type="component" value="Chromosome"/>
</dbReference>
<dbReference type="GO" id="GO:0008375">
    <property type="term" value="F:acetylglucosaminyltransferase activity"/>
    <property type="evidence" value="ECO:0007669"/>
    <property type="project" value="UniProtKB-UniRule"/>
</dbReference>
<dbReference type="GO" id="GO:0102710">
    <property type="term" value="F:D-inositol-3-phosphate glycosyltransferase activity"/>
    <property type="evidence" value="ECO:0007669"/>
    <property type="project" value="UniProtKB-EC"/>
</dbReference>
<dbReference type="GO" id="GO:0000287">
    <property type="term" value="F:magnesium ion binding"/>
    <property type="evidence" value="ECO:0007669"/>
    <property type="project" value="UniProtKB-UniRule"/>
</dbReference>
<dbReference type="GO" id="GO:0010125">
    <property type="term" value="P:mycothiol biosynthetic process"/>
    <property type="evidence" value="ECO:0007669"/>
    <property type="project" value="UniProtKB-UniRule"/>
</dbReference>
<dbReference type="CDD" id="cd03800">
    <property type="entry name" value="GT4_sucrose_synthase"/>
    <property type="match status" value="1"/>
</dbReference>
<dbReference type="Gene3D" id="3.40.50.2000">
    <property type="entry name" value="Glycogen Phosphorylase B"/>
    <property type="match status" value="2"/>
</dbReference>
<dbReference type="HAMAP" id="MF_01695">
    <property type="entry name" value="MshA"/>
    <property type="match status" value="1"/>
</dbReference>
<dbReference type="InterPro" id="IPR001296">
    <property type="entry name" value="Glyco_trans_1"/>
</dbReference>
<dbReference type="InterPro" id="IPR028098">
    <property type="entry name" value="Glyco_trans_4-like_N"/>
</dbReference>
<dbReference type="InterPro" id="IPR050194">
    <property type="entry name" value="Glycosyltransferase_grp1"/>
</dbReference>
<dbReference type="InterPro" id="IPR017814">
    <property type="entry name" value="Mycothiol_biosynthesis_MshA"/>
</dbReference>
<dbReference type="NCBIfam" id="TIGR03449">
    <property type="entry name" value="mycothiol_MshA"/>
    <property type="match status" value="1"/>
</dbReference>
<dbReference type="PANTHER" id="PTHR45947">
    <property type="entry name" value="SULFOQUINOVOSYL TRANSFERASE SQD2"/>
    <property type="match status" value="1"/>
</dbReference>
<dbReference type="PANTHER" id="PTHR45947:SF3">
    <property type="entry name" value="SULFOQUINOVOSYL TRANSFERASE SQD2"/>
    <property type="match status" value="1"/>
</dbReference>
<dbReference type="Pfam" id="PF13579">
    <property type="entry name" value="Glyco_trans_4_4"/>
    <property type="match status" value="1"/>
</dbReference>
<dbReference type="Pfam" id="PF00534">
    <property type="entry name" value="Glycos_transf_1"/>
    <property type="match status" value="1"/>
</dbReference>
<dbReference type="SUPFAM" id="SSF53756">
    <property type="entry name" value="UDP-Glycosyltransferase/glycogen phosphorylase"/>
    <property type="match status" value="1"/>
</dbReference>
<proteinExistence type="inferred from homology"/>
<feature type="chain" id="PRO_0000400167" description="D-inositol 3-phosphate glycosyltransferase">
    <location>
        <begin position="1"/>
        <end position="431"/>
    </location>
</feature>
<feature type="binding site" evidence="1">
    <location>
        <position position="14"/>
    </location>
    <ligand>
        <name>1D-myo-inositol 3-phosphate</name>
        <dbReference type="ChEBI" id="CHEBI:58401"/>
    </ligand>
</feature>
<feature type="binding site" evidence="1">
    <location>
        <begin position="20"/>
        <end position="21"/>
    </location>
    <ligand>
        <name>UDP-N-acetyl-alpha-D-glucosamine</name>
        <dbReference type="ChEBI" id="CHEBI:57705"/>
    </ligand>
</feature>
<feature type="binding site" evidence="1">
    <location>
        <begin position="25"/>
        <end position="30"/>
    </location>
    <ligand>
        <name>1D-myo-inositol 3-phosphate</name>
        <dbReference type="ChEBI" id="CHEBI:58401"/>
    </ligand>
</feature>
<feature type="binding site" evidence="1">
    <location>
        <position position="28"/>
    </location>
    <ligand>
        <name>UDP-N-acetyl-alpha-D-glucosamine</name>
        <dbReference type="ChEBI" id="CHEBI:57705"/>
    </ligand>
</feature>
<feature type="binding site" evidence="1">
    <location>
        <position position="83"/>
    </location>
    <ligand>
        <name>1D-myo-inositol 3-phosphate</name>
        <dbReference type="ChEBI" id="CHEBI:58401"/>
    </ligand>
</feature>
<feature type="binding site" evidence="1">
    <location>
        <position position="116"/>
    </location>
    <ligand>
        <name>1D-myo-inositol 3-phosphate</name>
        <dbReference type="ChEBI" id="CHEBI:58401"/>
    </ligand>
</feature>
<feature type="binding site" evidence="1">
    <location>
        <position position="140"/>
    </location>
    <ligand>
        <name>1D-myo-inositol 3-phosphate</name>
        <dbReference type="ChEBI" id="CHEBI:58401"/>
    </ligand>
</feature>
<feature type="binding site" evidence="1">
    <location>
        <position position="160"/>
    </location>
    <ligand>
        <name>1D-myo-inositol 3-phosphate</name>
        <dbReference type="ChEBI" id="CHEBI:58401"/>
    </ligand>
</feature>
<feature type="binding site" evidence="1">
    <location>
        <position position="240"/>
    </location>
    <ligand>
        <name>UDP-N-acetyl-alpha-D-glucosamine</name>
        <dbReference type="ChEBI" id="CHEBI:57705"/>
    </ligand>
</feature>
<feature type="binding site" evidence="1">
    <location>
        <position position="245"/>
    </location>
    <ligand>
        <name>UDP-N-acetyl-alpha-D-glucosamine</name>
        <dbReference type="ChEBI" id="CHEBI:57705"/>
    </ligand>
</feature>
<feature type="binding site" evidence="1">
    <location>
        <position position="315"/>
    </location>
    <ligand>
        <name>Mg(2+)</name>
        <dbReference type="ChEBI" id="CHEBI:18420"/>
    </ligand>
</feature>
<feature type="binding site" evidence="1">
    <location>
        <position position="316"/>
    </location>
    <ligand>
        <name>Mg(2+)</name>
        <dbReference type="ChEBI" id="CHEBI:18420"/>
    </ligand>
</feature>
<feature type="binding site" evidence="1">
    <location>
        <position position="318"/>
    </location>
    <ligand>
        <name>Mg(2+)</name>
        <dbReference type="ChEBI" id="CHEBI:18420"/>
    </ligand>
</feature>
<feature type="binding site" evidence="1">
    <location>
        <position position="328"/>
    </location>
    <ligand>
        <name>UDP-N-acetyl-alpha-D-glucosamine</name>
        <dbReference type="ChEBI" id="CHEBI:57705"/>
    </ligand>
</feature>
<feature type="binding site" evidence="1">
    <location>
        <position position="336"/>
    </location>
    <ligand>
        <name>UDP-N-acetyl-alpha-D-glucosamine</name>
        <dbReference type="ChEBI" id="CHEBI:57705"/>
    </ligand>
</feature>
<feature type="binding site" evidence="1">
    <location>
        <position position="342"/>
    </location>
    <ligand>
        <name>Mg(2+)</name>
        <dbReference type="ChEBI" id="CHEBI:18420"/>
    </ligand>
</feature>
<keyword id="KW-0328">Glycosyltransferase</keyword>
<keyword id="KW-0460">Magnesium</keyword>
<keyword id="KW-0479">Metal-binding</keyword>
<keyword id="KW-1185">Reference proteome</keyword>
<keyword id="KW-0808">Transferase</keyword>
<protein>
    <recommendedName>
        <fullName>D-inositol 3-phosphate glycosyltransferase</fullName>
        <ecNumber evidence="1">2.4.1.250</ecNumber>
    </recommendedName>
    <alternativeName>
        <fullName evidence="1">N-acetylglucosamine-inositol-phosphate N-acetylglucosaminyltransferase</fullName>
        <shortName evidence="1">GlcNAc-Ins-P N-acetylglucosaminyltransferase</shortName>
    </alternativeName>
</protein>
<accession>D1A4Q3</accession>
<evidence type="ECO:0000255" key="1">
    <source>
        <dbReference type="HAMAP-Rule" id="MF_01695"/>
    </source>
</evidence>
<gene>
    <name evidence="1" type="primary">mshA</name>
    <name type="ordered locus">Tcur_0695</name>
</gene>
<sequence length="431" mass="45919">MSLPIARIATISVHTSPLDQPGTGDAGGMNVYIVEIAKRLAARGVEVDIFTRATSRELPPVAELVSGVQVRHVVSGPFEELDKTELAGELCAFTSGVLRAEAAHDPGHYDLLHTHYWLSGQVGWVAKQRWGVPLVHSMHTMAKVKNAALAEGDTPEPAIRVLGEEQVTAGADRLVANTAEEARQLVELYGADPDRVGVVTPGVDLSLFRPRNGLLRGGADQARRRLGLPRDAYLLLFVGRIQPLKAPDVLLRAAALMVEADPALREHLVVAVVGGPSGSGRARPEGLQKLATELGIADLVRFEPPCPQPLLAEWYRAADVTVVPSHNESFGLVAAESQACGTPVVAAAVGGLRTAVRDGESGVLIDGHDPADYAAVLTRLRDEPRRRERLAAGAVRHARTLGWDATVDRLLEVYTGAKDTVNATAAGVLPR</sequence>
<reference key="1">
    <citation type="journal article" date="2011" name="Stand. Genomic Sci.">
        <title>Complete genome sequence of Thermomonospora curvata type strain (B9).</title>
        <authorList>
            <person name="Chertkov O."/>
            <person name="Sikorski J."/>
            <person name="Nolan M."/>
            <person name="Lapidus A."/>
            <person name="Lucas S."/>
            <person name="Del Rio T.G."/>
            <person name="Tice H."/>
            <person name="Cheng J.F."/>
            <person name="Goodwin L."/>
            <person name="Pitluck S."/>
            <person name="Liolios K."/>
            <person name="Ivanova N."/>
            <person name="Mavromatis K."/>
            <person name="Mikhailova N."/>
            <person name="Ovchinnikova G."/>
            <person name="Pati A."/>
            <person name="Chen A."/>
            <person name="Palaniappan K."/>
            <person name="Djao O.D."/>
            <person name="Land M."/>
            <person name="Hauser L."/>
            <person name="Chang Y.J."/>
            <person name="Jeffries C.D."/>
            <person name="Brettin T."/>
            <person name="Han C."/>
            <person name="Detter J.C."/>
            <person name="Rohde M."/>
            <person name="Goeker M."/>
            <person name="Woyke T."/>
            <person name="Bristow J."/>
            <person name="Eisen J.A."/>
            <person name="Markowitz V."/>
            <person name="Hugenholtz P."/>
            <person name="Klenk H.P."/>
            <person name="Kyrpides N.C."/>
        </authorList>
    </citation>
    <scope>NUCLEOTIDE SEQUENCE [LARGE SCALE GENOMIC DNA]</scope>
    <source>
        <strain>ATCC 19995 / DSM 43183 / JCM 3096 / KCTC 9072 / NBRC 15933 / NCIMB 10081 / Henssen B9</strain>
    </source>
</reference>
<comment type="function">
    <text evidence="1">Catalyzes the transfer of a N-acetyl-glucosamine moiety to 1D-myo-inositol 3-phosphate to produce 1D-myo-inositol 2-acetamido-2-deoxy-glucopyranoside 3-phosphate in the mycothiol biosynthesis pathway.</text>
</comment>
<comment type="catalytic activity">
    <reaction evidence="1">
        <text>1D-myo-inositol 3-phosphate + UDP-N-acetyl-alpha-D-glucosamine = 1D-myo-inositol 2-acetamido-2-deoxy-alpha-D-glucopyranoside 3-phosphate + UDP + H(+)</text>
        <dbReference type="Rhea" id="RHEA:26188"/>
        <dbReference type="ChEBI" id="CHEBI:15378"/>
        <dbReference type="ChEBI" id="CHEBI:57705"/>
        <dbReference type="ChEBI" id="CHEBI:58223"/>
        <dbReference type="ChEBI" id="CHEBI:58401"/>
        <dbReference type="ChEBI" id="CHEBI:58892"/>
        <dbReference type="EC" id="2.4.1.250"/>
    </reaction>
</comment>
<comment type="subunit">
    <text evidence="1">Homodimer.</text>
</comment>
<comment type="similarity">
    <text evidence="1">Belongs to the glycosyltransferase group 1 family. MshA subfamily.</text>
</comment>
<organism>
    <name type="scientific">Thermomonospora curvata (strain ATCC 19995 / DSM 43183 / JCM 3096 / KCTC 9072 / NBRC 15933 / NCIMB 10081 / Henssen B9)</name>
    <dbReference type="NCBI Taxonomy" id="471852"/>
    <lineage>
        <taxon>Bacteria</taxon>
        <taxon>Bacillati</taxon>
        <taxon>Actinomycetota</taxon>
        <taxon>Actinomycetes</taxon>
        <taxon>Streptosporangiales</taxon>
        <taxon>Thermomonosporaceae</taxon>
        <taxon>Thermomonospora</taxon>
    </lineage>
</organism>